<proteinExistence type="inferred from homology"/>
<comment type="function">
    <text evidence="1">Lyase that catalyzes the C1-decarboxylation of 4-hydroxy-3-methoxy-5-(all-trans-decaprenyl)benzoic acid into 2-methoxy-6-(all-trans-decaprenyl)phenol during ubiquinone biosynthesis.</text>
</comment>
<comment type="catalytic activity">
    <reaction evidence="1">
        <text>4-hydroxy-3-methoxy-5-(all-trans-decaprenyl)benzoate + H(+) = 2-methoxy-6-(all-trans-decaprenyl)phenol + CO2</text>
        <dbReference type="Rhea" id="RHEA:81275"/>
        <dbReference type="ChEBI" id="CHEBI:15378"/>
        <dbReference type="ChEBI" id="CHEBI:16526"/>
        <dbReference type="ChEBI" id="CHEBI:50774"/>
        <dbReference type="ChEBI" id="CHEBI:62796"/>
        <dbReference type="EC" id="4.1.1.130"/>
    </reaction>
</comment>
<comment type="cofactor">
    <cofactor evidence="1">
        <name>Zn(2+)</name>
        <dbReference type="ChEBI" id="CHEBI:29105"/>
    </cofactor>
</comment>
<comment type="pathway">
    <text evidence="1">Cofactor biosynthesis; ubiquinone biosynthesis.</text>
</comment>
<comment type="subunit">
    <text evidence="1">Component of a multi-subunit COQ enzyme complex, composed of at least coq3, coq4, coq5, coq6, coq7 and coq9.</text>
</comment>
<comment type="subcellular location">
    <subcellularLocation>
        <location evidence="1">Mitochondrion inner membrane</location>
        <topology evidence="1">Peripheral membrane protein</topology>
        <orientation evidence="1">Matrix side</orientation>
    </subcellularLocation>
</comment>
<comment type="miscellaneous">
    <text evidence="1">This protein may be expected to contain an N-terminal transit peptide but none has been predicted.</text>
</comment>
<comment type="similarity">
    <text evidence="1">Belongs to the COQ4 family.</text>
</comment>
<reference key="1">
    <citation type="journal article" date="2011" name="Science">
        <title>Comparative functional genomics of the fission yeasts.</title>
        <authorList>
            <person name="Rhind N."/>
            <person name="Chen Z."/>
            <person name="Yassour M."/>
            <person name="Thompson D.A."/>
            <person name="Haas B.J."/>
            <person name="Habib N."/>
            <person name="Wapinski I."/>
            <person name="Roy S."/>
            <person name="Lin M.F."/>
            <person name="Heiman D.I."/>
            <person name="Young S.K."/>
            <person name="Furuya K."/>
            <person name="Guo Y."/>
            <person name="Pidoux A."/>
            <person name="Chen H.M."/>
            <person name="Robbertse B."/>
            <person name="Goldberg J.M."/>
            <person name="Aoki K."/>
            <person name="Bayne E.H."/>
            <person name="Berlin A.M."/>
            <person name="Desjardins C.A."/>
            <person name="Dobbs E."/>
            <person name="Dukaj L."/>
            <person name="Fan L."/>
            <person name="FitzGerald M.G."/>
            <person name="French C."/>
            <person name="Gujja S."/>
            <person name="Hansen K."/>
            <person name="Keifenheim D."/>
            <person name="Levin J.Z."/>
            <person name="Mosher R.A."/>
            <person name="Mueller C.A."/>
            <person name="Pfiffner J."/>
            <person name="Priest M."/>
            <person name="Russ C."/>
            <person name="Smialowska A."/>
            <person name="Swoboda P."/>
            <person name="Sykes S.M."/>
            <person name="Vaughn M."/>
            <person name="Vengrova S."/>
            <person name="Yoder R."/>
            <person name="Zeng Q."/>
            <person name="Allshire R."/>
            <person name="Baulcombe D."/>
            <person name="Birren B.W."/>
            <person name="Brown W."/>
            <person name="Ekwall K."/>
            <person name="Kellis M."/>
            <person name="Leatherwood J."/>
            <person name="Levin H."/>
            <person name="Margalit H."/>
            <person name="Martienssen R."/>
            <person name="Nieduszynski C.A."/>
            <person name="Spatafora J.W."/>
            <person name="Friedman N."/>
            <person name="Dalgaard J.Z."/>
            <person name="Baumann P."/>
            <person name="Niki H."/>
            <person name="Regev A."/>
            <person name="Nusbaum C."/>
        </authorList>
    </citation>
    <scope>NUCLEOTIDE SEQUENCE [LARGE SCALE GENOMIC DNA]</scope>
    <source>
        <strain>yFS275 / FY16936</strain>
    </source>
</reference>
<protein>
    <recommendedName>
        <fullName evidence="1">Ubiquinone biosynthesis protein coq4, mitochondrial</fullName>
    </recommendedName>
    <alternativeName>
        <fullName evidence="1">4-hydroxy-3-methoxy-5-polyprenylbenzoate decarboxylase</fullName>
        <ecNumber evidence="1">4.1.1.130</ecNumber>
    </alternativeName>
    <alternativeName>
        <fullName evidence="1">Coenzyme Q biosynthesis protein 4</fullName>
    </alternativeName>
</protein>
<evidence type="ECO:0000255" key="1">
    <source>
        <dbReference type="HAMAP-Rule" id="MF_03111"/>
    </source>
</evidence>
<accession>B6JWE5</accession>
<feature type="chain" id="PRO_0000388137" description="Ubiquinone biosynthesis protein coq4, mitochondrial">
    <location>
        <begin position="1"/>
        <end position="239"/>
    </location>
</feature>
<feature type="binding site" evidence="1">
    <location>
        <position position="137"/>
    </location>
    <ligand>
        <name>Zn(2+)</name>
        <dbReference type="ChEBI" id="CHEBI:29105"/>
    </ligand>
</feature>
<feature type="binding site" evidence="1">
    <location>
        <position position="138"/>
    </location>
    <ligand>
        <name>Zn(2+)</name>
        <dbReference type="ChEBI" id="CHEBI:29105"/>
    </ligand>
</feature>
<feature type="binding site" evidence="1">
    <location>
        <position position="141"/>
    </location>
    <ligand>
        <name>Zn(2+)</name>
        <dbReference type="ChEBI" id="CHEBI:29105"/>
    </ligand>
</feature>
<feature type="binding site" evidence="1">
    <location>
        <position position="153"/>
    </location>
    <ligand>
        <name>Zn(2+)</name>
        <dbReference type="ChEBI" id="CHEBI:29105"/>
    </ligand>
</feature>
<name>COQ4_SCHJY</name>
<organism>
    <name type="scientific">Schizosaccharomyces japonicus (strain yFS275 / FY16936)</name>
    <name type="common">Fission yeast</name>
    <dbReference type="NCBI Taxonomy" id="402676"/>
    <lineage>
        <taxon>Eukaryota</taxon>
        <taxon>Fungi</taxon>
        <taxon>Dikarya</taxon>
        <taxon>Ascomycota</taxon>
        <taxon>Taphrinomycotina</taxon>
        <taxon>Schizosaccharomycetes</taxon>
        <taxon>Schizosaccharomycetales</taxon>
        <taxon>Schizosaccharomycetaceae</taxon>
        <taxon>Schizosaccharomyces</taxon>
    </lineage>
</organism>
<keyword id="KW-0456">Lyase</keyword>
<keyword id="KW-0472">Membrane</keyword>
<keyword id="KW-0479">Metal-binding</keyword>
<keyword id="KW-0496">Mitochondrion</keyword>
<keyword id="KW-0999">Mitochondrion inner membrane</keyword>
<keyword id="KW-1185">Reference proteome</keyword>
<keyword id="KW-0831">Ubiquinone biosynthesis</keyword>
<keyword id="KW-0862">Zinc</keyword>
<gene>
    <name type="primary">coq4</name>
    <name type="ORF">SJAG_00721</name>
</gene>
<sequence>MFFPNARPVNYPGHIPLSPLQRMFLVAGSAIMGLKAPWRGDMIAVLGDASGQPFFLRRLRDKMLANETGRRILKEQPRMTSKSLNLPHLRTLPPNTLGRIYVDWIDKEHVTPDSRAPTRYVDDPEEAYVMQRYRECHDFFHAVSQMPTNIEGELAIKWLEFINMGLPVGALSALFGPLRLNRVQASRFRRTYVPWAIRNGLKAELLVNVYWEKELENDVDEVRQHIRLQQAPALSPNTP</sequence>
<dbReference type="EC" id="4.1.1.130" evidence="1"/>
<dbReference type="EMBL" id="KE651166">
    <property type="protein sequence ID" value="EEB05696.1"/>
    <property type="molecule type" value="Genomic_DNA"/>
</dbReference>
<dbReference type="RefSeq" id="XP_002171989.1">
    <property type="nucleotide sequence ID" value="XM_002171953.1"/>
</dbReference>
<dbReference type="SMR" id="B6JWE5"/>
<dbReference type="STRING" id="402676.B6JWE5"/>
<dbReference type="EnsemblFungi" id="EEB05696">
    <property type="protein sequence ID" value="EEB05696"/>
    <property type="gene ID" value="SJAG_00721"/>
</dbReference>
<dbReference type="GeneID" id="7052137"/>
<dbReference type="JaponicusDB" id="SJAG_00721">
    <property type="gene designation" value="coq4"/>
</dbReference>
<dbReference type="VEuPathDB" id="FungiDB:SJAG_00721"/>
<dbReference type="eggNOG" id="KOG3244">
    <property type="taxonomic scope" value="Eukaryota"/>
</dbReference>
<dbReference type="HOGENOM" id="CLU_061241_0_0_1"/>
<dbReference type="OMA" id="YYERHFH"/>
<dbReference type="OrthoDB" id="4249at2759"/>
<dbReference type="UniPathway" id="UPA00232"/>
<dbReference type="Proteomes" id="UP000001744">
    <property type="component" value="Unassembled WGS sequence"/>
</dbReference>
<dbReference type="GO" id="GO:0031314">
    <property type="term" value="C:extrinsic component of mitochondrial inner membrane"/>
    <property type="evidence" value="ECO:0007669"/>
    <property type="project" value="UniProtKB-UniRule"/>
</dbReference>
<dbReference type="GO" id="GO:0005739">
    <property type="term" value="C:mitochondrion"/>
    <property type="evidence" value="ECO:0000318"/>
    <property type="project" value="GO_Central"/>
</dbReference>
<dbReference type="GO" id="GO:0006744">
    <property type="term" value="P:ubiquinone biosynthetic process"/>
    <property type="evidence" value="ECO:0007669"/>
    <property type="project" value="UniProtKB-UniRule"/>
</dbReference>
<dbReference type="HAMAP" id="MF_03111">
    <property type="entry name" value="Coq4"/>
    <property type="match status" value="1"/>
</dbReference>
<dbReference type="InterPro" id="IPR007715">
    <property type="entry name" value="Coq4"/>
</dbReference>
<dbReference type="InterPro" id="IPR027540">
    <property type="entry name" value="Coq4_euk"/>
</dbReference>
<dbReference type="PANTHER" id="PTHR12922">
    <property type="entry name" value="UBIQUINONE BIOSYNTHESIS PROTEIN"/>
    <property type="match status" value="1"/>
</dbReference>
<dbReference type="PANTHER" id="PTHR12922:SF7">
    <property type="entry name" value="UBIQUINONE BIOSYNTHESIS PROTEIN COQ4 HOMOLOG, MITOCHONDRIAL"/>
    <property type="match status" value="1"/>
</dbReference>
<dbReference type="Pfam" id="PF05019">
    <property type="entry name" value="Coq4"/>
    <property type="match status" value="1"/>
</dbReference>